<organism>
    <name type="scientific">Bacillus subtilis (strain 168)</name>
    <dbReference type="NCBI Taxonomy" id="224308"/>
    <lineage>
        <taxon>Bacteria</taxon>
        <taxon>Bacillati</taxon>
        <taxon>Bacillota</taxon>
        <taxon>Bacilli</taxon>
        <taxon>Bacillales</taxon>
        <taxon>Bacillaceae</taxon>
        <taxon>Bacillus</taxon>
    </lineage>
</organism>
<comment type="function">
    <text evidence="1 2">Inhibitor of Spx proteolytic control. Acts by interacting with SpxH/YjbH, which disrupts interaction between SpxH and Spx, and inhibits SpxH-enhanced proteolysis of Spx by ClpXP (PubMed:21378193). Required for the stabilization of Spx and activation of Spx-regulated genes in response to cell wall stress (PubMed:30001325).</text>
</comment>
<comment type="subunit">
    <text evidence="1">Interacts with SpxH.</text>
</comment>
<comment type="interaction">
    <interactant intactId="EBI-6413973">
        <id>O32302</id>
    </interactant>
    <interactant intactId="EBI-6406036">
        <id>O31606</id>
        <label>spxH</label>
    </interactant>
    <organismsDiffer>false</organismsDiffer>
    <experiments>3</experiments>
</comment>
<comment type="induction">
    <text evidence="2">Induced under cell wall stress, but not disulfide stress, and this induction requires the CssRS two-component system, which responds to both secretion stress and cell wall antibiotics. Phosphorylated CssR acts as an anti-repressor by antagonizing YuxN repression.</text>
</comment>
<comment type="disruption phenotype">
    <text evidence="2">Deletion of the gene causes a decrease in the overall Spx levels, as well as a change in the dynamics of Spx accumulation.</text>
</comment>
<protein>
    <recommendedName>
        <fullName evidence="5">Anti-adapter protein SpxO</fullName>
    </recommendedName>
</protein>
<accession>O32302</accession>
<name>SPXO_BACSU</name>
<reference key="1">
    <citation type="journal article" date="1997" name="Microbiology">
        <title>Sequencing of regions downstream of addA (98 degrees) and citG (289 degrees) in Bacillus subtilis.</title>
        <authorList>
            <person name="Medina N."/>
            <person name="Vannier F."/>
            <person name="Roche B."/>
            <person name="Autret S."/>
            <person name="Levine A."/>
            <person name="Seror S.J."/>
        </authorList>
    </citation>
    <scope>NUCLEOTIDE SEQUENCE [GENOMIC DNA]</scope>
</reference>
<reference key="2">
    <citation type="journal article" date="1997" name="Nature">
        <title>The complete genome sequence of the Gram-positive bacterium Bacillus subtilis.</title>
        <authorList>
            <person name="Kunst F."/>
            <person name="Ogasawara N."/>
            <person name="Moszer I."/>
            <person name="Albertini A.M."/>
            <person name="Alloni G."/>
            <person name="Azevedo V."/>
            <person name="Bertero M.G."/>
            <person name="Bessieres P."/>
            <person name="Bolotin A."/>
            <person name="Borchert S."/>
            <person name="Borriss R."/>
            <person name="Boursier L."/>
            <person name="Brans A."/>
            <person name="Braun M."/>
            <person name="Brignell S.C."/>
            <person name="Bron S."/>
            <person name="Brouillet S."/>
            <person name="Bruschi C.V."/>
            <person name="Caldwell B."/>
            <person name="Capuano V."/>
            <person name="Carter N.M."/>
            <person name="Choi S.-K."/>
            <person name="Codani J.-J."/>
            <person name="Connerton I.F."/>
            <person name="Cummings N.J."/>
            <person name="Daniel R.A."/>
            <person name="Denizot F."/>
            <person name="Devine K.M."/>
            <person name="Duesterhoeft A."/>
            <person name="Ehrlich S.D."/>
            <person name="Emmerson P.T."/>
            <person name="Entian K.-D."/>
            <person name="Errington J."/>
            <person name="Fabret C."/>
            <person name="Ferrari E."/>
            <person name="Foulger D."/>
            <person name="Fritz C."/>
            <person name="Fujita M."/>
            <person name="Fujita Y."/>
            <person name="Fuma S."/>
            <person name="Galizzi A."/>
            <person name="Galleron N."/>
            <person name="Ghim S.-Y."/>
            <person name="Glaser P."/>
            <person name="Goffeau A."/>
            <person name="Golightly E.J."/>
            <person name="Grandi G."/>
            <person name="Guiseppi G."/>
            <person name="Guy B.J."/>
            <person name="Haga K."/>
            <person name="Haiech J."/>
            <person name="Harwood C.R."/>
            <person name="Henaut A."/>
            <person name="Hilbert H."/>
            <person name="Holsappel S."/>
            <person name="Hosono S."/>
            <person name="Hullo M.-F."/>
            <person name="Itaya M."/>
            <person name="Jones L.-M."/>
            <person name="Joris B."/>
            <person name="Karamata D."/>
            <person name="Kasahara Y."/>
            <person name="Klaerr-Blanchard M."/>
            <person name="Klein C."/>
            <person name="Kobayashi Y."/>
            <person name="Koetter P."/>
            <person name="Koningstein G."/>
            <person name="Krogh S."/>
            <person name="Kumano M."/>
            <person name="Kurita K."/>
            <person name="Lapidus A."/>
            <person name="Lardinois S."/>
            <person name="Lauber J."/>
            <person name="Lazarevic V."/>
            <person name="Lee S.-M."/>
            <person name="Levine A."/>
            <person name="Liu H."/>
            <person name="Masuda S."/>
            <person name="Mauel C."/>
            <person name="Medigue C."/>
            <person name="Medina N."/>
            <person name="Mellado R.P."/>
            <person name="Mizuno M."/>
            <person name="Moestl D."/>
            <person name="Nakai S."/>
            <person name="Noback M."/>
            <person name="Noone D."/>
            <person name="O'Reilly M."/>
            <person name="Ogawa K."/>
            <person name="Ogiwara A."/>
            <person name="Oudega B."/>
            <person name="Park S.-H."/>
            <person name="Parro V."/>
            <person name="Pohl T.M."/>
            <person name="Portetelle D."/>
            <person name="Porwollik S."/>
            <person name="Prescott A.M."/>
            <person name="Presecan E."/>
            <person name="Pujic P."/>
            <person name="Purnelle B."/>
            <person name="Rapoport G."/>
            <person name="Rey M."/>
            <person name="Reynolds S."/>
            <person name="Rieger M."/>
            <person name="Rivolta C."/>
            <person name="Rocha E."/>
            <person name="Roche B."/>
            <person name="Rose M."/>
            <person name="Sadaie Y."/>
            <person name="Sato T."/>
            <person name="Scanlan E."/>
            <person name="Schleich S."/>
            <person name="Schroeter R."/>
            <person name="Scoffone F."/>
            <person name="Sekiguchi J."/>
            <person name="Sekowska A."/>
            <person name="Seror S.J."/>
            <person name="Serror P."/>
            <person name="Shin B.-S."/>
            <person name="Soldo B."/>
            <person name="Sorokin A."/>
            <person name="Tacconi E."/>
            <person name="Takagi T."/>
            <person name="Takahashi H."/>
            <person name="Takemaru K."/>
            <person name="Takeuchi M."/>
            <person name="Tamakoshi A."/>
            <person name="Tanaka T."/>
            <person name="Terpstra P."/>
            <person name="Tognoni A."/>
            <person name="Tosato V."/>
            <person name="Uchiyama S."/>
            <person name="Vandenbol M."/>
            <person name="Vannier F."/>
            <person name="Vassarotti A."/>
            <person name="Viari A."/>
            <person name="Wambutt R."/>
            <person name="Wedler E."/>
            <person name="Wedler H."/>
            <person name="Weitzenegger T."/>
            <person name="Winters P."/>
            <person name="Wipat A."/>
            <person name="Yamamoto H."/>
            <person name="Yamane K."/>
            <person name="Yasumoto K."/>
            <person name="Yata K."/>
            <person name="Yoshida K."/>
            <person name="Yoshikawa H.-F."/>
            <person name="Zumstein E."/>
            <person name="Yoshikawa H."/>
            <person name="Danchin A."/>
        </authorList>
    </citation>
    <scope>NUCLEOTIDE SEQUENCE [LARGE SCALE GENOMIC DNA]</scope>
    <source>
        <strain>168</strain>
    </source>
</reference>
<reference key="3">
    <citation type="journal article" date="2011" name="J. Bacteriol.">
        <title>YjbH-enhanced proteolysis of Spx by ClpXP in Bacillus subtilis is inhibited by the small protein YirB (YuzO).</title>
        <authorList>
            <person name="Kommineni S."/>
            <person name="Garg S.K."/>
            <person name="Chan C.M."/>
            <person name="Zuber P."/>
        </authorList>
    </citation>
    <scope>FUNCTION</scope>
    <scope>INTERACTION WITH SPXH/YJBH</scope>
    <source>
        <strain>168 / JH642</strain>
    </source>
</reference>
<reference key="4">
    <citation type="journal article" date="2018" name="PLoS Genet.">
        <title>Stabilization of Bacillus subtilis Spx under cell wall stress requires the anti-adaptor protein YirB.</title>
        <authorList>
            <person name="Rojas-Tapias D.F."/>
            <person name="Helmann J.D."/>
        </authorList>
    </citation>
    <scope>FUNCTION</scope>
    <scope>INDUCTION</scope>
    <scope>DISRUPTION PHENOTYPE</scope>
</reference>
<sequence length="54" mass="6620">MRELDEMISRLRNRGIKVEKVKYPKQTLSEKKWVHQCKQPLKTNYRDFNGYSFT</sequence>
<dbReference type="EMBL" id="Z93941">
    <property type="protein sequence ID" value="CAB07975.1"/>
    <property type="molecule type" value="Genomic_DNA"/>
</dbReference>
<dbReference type="EMBL" id="AL009126">
    <property type="protein sequence ID" value="CAX52691.1"/>
    <property type="molecule type" value="Genomic_DNA"/>
</dbReference>
<dbReference type="RefSeq" id="WP_003221681.1">
    <property type="nucleotide sequence ID" value="NZ_OZ025638.1"/>
</dbReference>
<dbReference type="RefSeq" id="YP_003097785.1">
    <property type="nucleotide sequence ID" value="NC_000964.3"/>
</dbReference>
<dbReference type="SMR" id="O32302"/>
<dbReference type="IntAct" id="O32302">
    <property type="interactions" value="1"/>
</dbReference>
<dbReference type="STRING" id="224308.BSU33029"/>
<dbReference type="PaxDb" id="224308-BSU33029"/>
<dbReference type="EnsemblBacteria" id="CAX52691">
    <property type="protein sequence ID" value="CAX52691"/>
    <property type="gene ID" value="BSU_33029"/>
</dbReference>
<dbReference type="GeneID" id="76988143"/>
<dbReference type="GeneID" id="8303202"/>
<dbReference type="KEGG" id="bsu:BSU33029"/>
<dbReference type="PATRIC" id="fig|224308.179.peg.3579"/>
<dbReference type="eggNOG" id="ENOG5030DN8">
    <property type="taxonomic scope" value="Bacteria"/>
</dbReference>
<dbReference type="InParanoid" id="O32302"/>
<dbReference type="OrthoDB" id="2892803at2"/>
<dbReference type="BioCyc" id="BSUB:BSU33029-MONOMER"/>
<dbReference type="PRO" id="PR:O32302"/>
<dbReference type="Proteomes" id="UP000001570">
    <property type="component" value="Chromosome"/>
</dbReference>
<dbReference type="InterPro" id="IPR048179">
    <property type="entry name" value="SpxO-like"/>
</dbReference>
<dbReference type="NCBIfam" id="NF041458">
    <property type="entry name" value="antiadapt_SpxO"/>
    <property type="match status" value="1"/>
</dbReference>
<evidence type="ECO:0000269" key="1">
    <source>
    </source>
</evidence>
<evidence type="ECO:0000269" key="2">
    <source>
    </source>
</evidence>
<evidence type="ECO:0000303" key="3">
    <source>
    </source>
</evidence>
<evidence type="ECO:0000303" key="4">
    <source>
    </source>
</evidence>
<evidence type="ECO:0000305" key="5"/>
<evidence type="ECO:0000312" key="6">
    <source>
        <dbReference type="EMBL" id="CAX52691.1"/>
    </source>
</evidence>
<feature type="chain" id="PRO_0000382897" description="Anti-adapter protein SpxO">
    <location>
        <begin position="1"/>
        <end position="54"/>
    </location>
</feature>
<gene>
    <name evidence="6" type="primary">spxO</name>
    <name evidence="4" type="synonym">yirB</name>
    <name evidence="3" type="synonym">yuzO</name>
    <name type="ordered locus">BSU33029</name>
</gene>
<keyword id="KW-1185">Reference proteome</keyword>
<proteinExistence type="evidence at protein level"/>